<keyword id="KW-0328">Glycosyltransferase</keyword>
<keyword id="KW-0808">Transferase</keyword>
<accession>A4WG18</accession>
<feature type="chain" id="PRO_1000062730" description="UDP-N-acetyl-D-mannosaminuronic acid transferase">
    <location>
        <begin position="1"/>
        <end position="247"/>
    </location>
</feature>
<comment type="function">
    <text evidence="1">Catalyzes the synthesis of Und-PP-GlcNAc-ManNAcA (Lipid II), the second lipid-linked intermediate involved in enterobacterial common antigen (ECA) synthesis.</text>
</comment>
<comment type="catalytic activity">
    <reaction evidence="1">
        <text>UDP-N-acetyl-alpha-D-mannosaminouronate + N-acetyl-alpha-D-glucosaminyl-di-trans,octa-cis-undecaprenyl diphosphate = beta-D-ManNAcA-(1-&gt;4)-alpha-D-GlcNAc-di-trans,octa-cis-undecaprenyl diphosphate + UDP + H(+)</text>
        <dbReference type="Rhea" id="RHEA:28366"/>
        <dbReference type="ChEBI" id="CHEBI:15378"/>
        <dbReference type="ChEBI" id="CHEBI:58223"/>
        <dbReference type="ChEBI" id="CHEBI:61495"/>
        <dbReference type="ChEBI" id="CHEBI:62959"/>
        <dbReference type="ChEBI" id="CHEBI:70731"/>
        <dbReference type="EC" id="2.4.1.180"/>
    </reaction>
</comment>
<comment type="pathway">
    <text evidence="1">Bacterial outer membrane biogenesis; enterobacterial common antigen biosynthesis.</text>
</comment>
<comment type="similarity">
    <text evidence="1">Belongs to the glycosyltransferase 26 family.</text>
</comment>
<name>WECG_ENT38</name>
<dbReference type="EC" id="2.4.1.180" evidence="1"/>
<dbReference type="EMBL" id="CP000653">
    <property type="protein sequence ID" value="ABP62648.1"/>
    <property type="molecule type" value="Genomic_DNA"/>
</dbReference>
<dbReference type="RefSeq" id="WP_015960953.1">
    <property type="nucleotide sequence ID" value="NC_009436.1"/>
</dbReference>
<dbReference type="SMR" id="A4WG18"/>
<dbReference type="STRING" id="399742.Ent638_3993"/>
<dbReference type="CAZy" id="GT26">
    <property type="family name" value="Glycosyltransferase Family 26"/>
</dbReference>
<dbReference type="KEGG" id="ent:Ent638_3993"/>
<dbReference type="eggNOG" id="COG1922">
    <property type="taxonomic scope" value="Bacteria"/>
</dbReference>
<dbReference type="HOGENOM" id="CLU_063203_3_2_6"/>
<dbReference type="OrthoDB" id="9808602at2"/>
<dbReference type="UniPathway" id="UPA00566"/>
<dbReference type="Proteomes" id="UP000000230">
    <property type="component" value="Chromosome"/>
</dbReference>
<dbReference type="GO" id="GO:0047241">
    <property type="term" value="F:lipopolysaccharide N-acetylmannosaminouronosyltransferase activity"/>
    <property type="evidence" value="ECO:0007669"/>
    <property type="project" value="UniProtKB-UniRule"/>
</dbReference>
<dbReference type="GO" id="GO:0009246">
    <property type="term" value="P:enterobacterial common antigen biosynthetic process"/>
    <property type="evidence" value="ECO:0007669"/>
    <property type="project" value="UniProtKB-UniRule"/>
</dbReference>
<dbReference type="CDD" id="cd06533">
    <property type="entry name" value="Glyco_transf_WecG_TagA"/>
    <property type="match status" value="1"/>
</dbReference>
<dbReference type="HAMAP" id="MF_01001">
    <property type="entry name" value="WecG_RffM"/>
    <property type="match status" value="1"/>
</dbReference>
<dbReference type="InterPro" id="IPR023085">
    <property type="entry name" value="UDP-ManNAcA_Trfase_WecG"/>
</dbReference>
<dbReference type="InterPro" id="IPR004629">
    <property type="entry name" value="WecG_TagA_CpsF"/>
</dbReference>
<dbReference type="NCBIfam" id="NF002980">
    <property type="entry name" value="PRK03692.1"/>
    <property type="match status" value="1"/>
</dbReference>
<dbReference type="NCBIfam" id="TIGR00696">
    <property type="entry name" value="wecG_tagA_cpsF"/>
    <property type="match status" value="1"/>
</dbReference>
<dbReference type="PANTHER" id="PTHR34136">
    <property type="match status" value="1"/>
</dbReference>
<dbReference type="PANTHER" id="PTHR34136:SF1">
    <property type="entry name" value="UDP-N-ACETYL-D-MANNOSAMINURONIC ACID TRANSFERASE"/>
    <property type="match status" value="1"/>
</dbReference>
<dbReference type="Pfam" id="PF03808">
    <property type="entry name" value="Glyco_tran_WecG"/>
    <property type="match status" value="1"/>
</dbReference>
<evidence type="ECO:0000255" key="1">
    <source>
        <dbReference type="HAMAP-Rule" id="MF_01001"/>
    </source>
</evidence>
<proteinExistence type="inferred from homology"/>
<protein>
    <recommendedName>
        <fullName evidence="1">UDP-N-acetyl-D-mannosaminuronic acid transferase</fullName>
        <shortName evidence="1">UDP-ManNAcA transferase</shortName>
        <ecNumber evidence="1">2.4.1.180</ecNumber>
    </recommendedName>
</protein>
<gene>
    <name evidence="1" type="primary">wecG</name>
    <name evidence="1" type="synonym">rffM</name>
    <name type="ordered locus">Ent638_3993</name>
</gene>
<organism>
    <name type="scientific">Enterobacter sp. (strain 638)</name>
    <dbReference type="NCBI Taxonomy" id="399742"/>
    <lineage>
        <taxon>Bacteria</taxon>
        <taxon>Pseudomonadati</taxon>
        <taxon>Pseudomonadota</taxon>
        <taxon>Gammaproteobacteria</taxon>
        <taxon>Enterobacterales</taxon>
        <taxon>Enterobacteriaceae</taxon>
        <taxon>Enterobacter</taxon>
    </lineage>
</organism>
<sequence>MTDNTSAPMYTLRGLQLIGWRDMQHALDFLCAADGQIKSGTLVAINAEKMLAIEDNAEVKGLIEAAEFKYADGISVVRSIRKKYPQARVSRVAGADLWEALMARAGAANTPVFLIGGKPEVLSQTEQKLRAQWNVNIVGSQDGYFKPEDRQALFERVRDSGAKIVTVAMGSPRQEILMRDCRMICPDALYMGVGGTYDVFTGHVKRAPKVWQNLGLEWLYRLLSQPSRITRQIKLLRYLAWHYTGKM</sequence>
<reference key="1">
    <citation type="journal article" date="2010" name="PLoS Genet.">
        <title>Genome sequence of the plant growth promoting endophytic bacterium Enterobacter sp. 638.</title>
        <authorList>
            <person name="Taghavi S."/>
            <person name="van der Lelie D."/>
            <person name="Hoffman A."/>
            <person name="Zhang Y.B."/>
            <person name="Walla M.D."/>
            <person name="Vangronsveld J."/>
            <person name="Newman L."/>
            <person name="Monchy S."/>
        </authorList>
    </citation>
    <scope>NUCLEOTIDE SEQUENCE [LARGE SCALE GENOMIC DNA]</scope>
    <source>
        <strain>638</strain>
    </source>
</reference>